<sequence length="130" mass="14611">MSKDFNYATGRRKNAVARTRLYEGTGAITVNGKPYEDYFPRKTLQMIVQQPLKLTKTLGKFDIKVNADGGGVAGQAQAVRHGISRALIEIDPELRSILKRAGLLTRDARKKERKKYGQPGARAKFQYSKR</sequence>
<gene>
    <name evidence="1" type="primary">rpsI</name>
    <name type="ordered locus">Desal_3124</name>
</gene>
<dbReference type="EMBL" id="CP001649">
    <property type="protein sequence ID" value="ACS81175.1"/>
    <property type="molecule type" value="Genomic_DNA"/>
</dbReference>
<dbReference type="RefSeq" id="WP_015852991.1">
    <property type="nucleotide sequence ID" value="NC_012881.1"/>
</dbReference>
<dbReference type="SMR" id="C6C1K0"/>
<dbReference type="STRING" id="526222.Desal_3124"/>
<dbReference type="KEGG" id="dsa:Desal_3124"/>
<dbReference type="eggNOG" id="COG0103">
    <property type="taxonomic scope" value="Bacteria"/>
</dbReference>
<dbReference type="HOGENOM" id="CLU_046483_2_1_7"/>
<dbReference type="OrthoDB" id="9803965at2"/>
<dbReference type="Proteomes" id="UP000002601">
    <property type="component" value="Chromosome"/>
</dbReference>
<dbReference type="GO" id="GO:0005737">
    <property type="term" value="C:cytoplasm"/>
    <property type="evidence" value="ECO:0007669"/>
    <property type="project" value="UniProtKB-ARBA"/>
</dbReference>
<dbReference type="GO" id="GO:0015935">
    <property type="term" value="C:small ribosomal subunit"/>
    <property type="evidence" value="ECO:0007669"/>
    <property type="project" value="TreeGrafter"/>
</dbReference>
<dbReference type="GO" id="GO:0003723">
    <property type="term" value="F:RNA binding"/>
    <property type="evidence" value="ECO:0007669"/>
    <property type="project" value="TreeGrafter"/>
</dbReference>
<dbReference type="GO" id="GO:0003735">
    <property type="term" value="F:structural constituent of ribosome"/>
    <property type="evidence" value="ECO:0007669"/>
    <property type="project" value="InterPro"/>
</dbReference>
<dbReference type="GO" id="GO:0006412">
    <property type="term" value="P:translation"/>
    <property type="evidence" value="ECO:0007669"/>
    <property type="project" value="UniProtKB-UniRule"/>
</dbReference>
<dbReference type="FunFam" id="3.30.230.10:FF:000001">
    <property type="entry name" value="30S ribosomal protein S9"/>
    <property type="match status" value="1"/>
</dbReference>
<dbReference type="Gene3D" id="3.30.230.10">
    <property type="match status" value="1"/>
</dbReference>
<dbReference type="HAMAP" id="MF_00532_B">
    <property type="entry name" value="Ribosomal_uS9_B"/>
    <property type="match status" value="1"/>
</dbReference>
<dbReference type="InterPro" id="IPR020568">
    <property type="entry name" value="Ribosomal_Su5_D2-typ_SF"/>
</dbReference>
<dbReference type="InterPro" id="IPR000754">
    <property type="entry name" value="Ribosomal_uS9"/>
</dbReference>
<dbReference type="InterPro" id="IPR023035">
    <property type="entry name" value="Ribosomal_uS9_bac/plastid"/>
</dbReference>
<dbReference type="InterPro" id="IPR020574">
    <property type="entry name" value="Ribosomal_uS9_CS"/>
</dbReference>
<dbReference type="InterPro" id="IPR014721">
    <property type="entry name" value="Ribsml_uS5_D2-typ_fold_subgr"/>
</dbReference>
<dbReference type="NCBIfam" id="NF001099">
    <property type="entry name" value="PRK00132.1"/>
    <property type="match status" value="1"/>
</dbReference>
<dbReference type="PANTHER" id="PTHR21569">
    <property type="entry name" value="RIBOSOMAL PROTEIN S9"/>
    <property type="match status" value="1"/>
</dbReference>
<dbReference type="PANTHER" id="PTHR21569:SF1">
    <property type="entry name" value="SMALL RIBOSOMAL SUBUNIT PROTEIN US9M"/>
    <property type="match status" value="1"/>
</dbReference>
<dbReference type="Pfam" id="PF00380">
    <property type="entry name" value="Ribosomal_S9"/>
    <property type="match status" value="1"/>
</dbReference>
<dbReference type="SUPFAM" id="SSF54211">
    <property type="entry name" value="Ribosomal protein S5 domain 2-like"/>
    <property type="match status" value="1"/>
</dbReference>
<dbReference type="PROSITE" id="PS00360">
    <property type="entry name" value="RIBOSOMAL_S9"/>
    <property type="match status" value="1"/>
</dbReference>
<protein>
    <recommendedName>
        <fullName evidence="1">Small ribosomal subunit protein uS9</fullName>
    </recommendedName>
    <alternativeName>
        <fullName evidence="3">30S ribosomal protein S9</fullName>
    </alternativeName>
</protein>
<keyword id="KW-1185">Reference proteome</keyword>
<keyword id="KW-0687">Ribonucleoprotein</keyword>
<keyword id="KW-0689">Ribosomal protein</keyword>
<comment type="similarity">
    <text evidence="1">Belongs to the universal ribosomal protein uS9 family.</text>
</comment>
<evidence type="ECO:0000255" key="1">
    <source>
        <dbReference type="HAMAP-Rule" id="MF_00532"/>
    </source>
</evidence>
<evidence type="ECO:0000256" key="2">
    <source>
        <dbReference type="SAM" id="MobiDB-lite"/>
    </source>
</evidence>
<evidence type="ECO:0000305" key="3"/>
<feature type="chain" id="PRO_1000211829" description="Small ribosomal subunit protein uS9">
    <location>
        <begin position="1"/>
        <end position="130"/>
    </location>
</feature>
<feature type="region of interest" description="Disordered" evidence="2">
    <location>
        <begin position="109"/>
        <end position="130"/>
    </location>
</feature>
<organism>
    <name type="scientific">Maridesulfovibrio salexigens (strain ATCC 14822 / DSM 2638 / NCIMB 8403 / VKM B-1763)</name>
    <name type="common">Desulfovibrio salexigens</name>
    <dbReference type="NCBI Taxonomy" id="526222"/>
    <lineage>
        <taxon>Bacteria</taxon>
        <taxon>Pseudomonadati</taxon>
        <taxon>Thermodesulfobacteriota</taxon>
        <taxon>Desulfovibrionia</taxon>
        <taxon>Desulfovibrionales</taxon>
        <taxon>Desulfovibrionaceae</taxon>
        <taxon>Maridesulfovibrio</taxon>
    </lineage>
</organism>
<proteinExistence type="inferred from homology"/>
<accession>C6C1K0</accession>
<name>RS9_MARSD</name>
<reference key="1">
    <citation type="submission" date="2009-06" db="EMBL/GenBank/DDBJ databases">
        <title>Complete sequence of Desulfovibrio salexigens DSM 2638.</title>
        <authorList>
            <consortium name="US DOE Joint Genome Institute"/>
            <person name="Lucas S."/>
            <person name="Copeland A."/>
            <person name="Lapidus A."/>
            <person name="Glavina del Rio T."/>
            <person name="Tice H."/>
            <person name="Bruce D."/>
            <person name="Goodwin L."/>
            <person name="Pitluck S."/>
            <person name="Munk A.C."/>
            <person name="Brettin T."/>
            <person name="Detter J.C."/>
            <person name="Han C."/>
            <person name="Tapia R."/>
            <person name="Larimer F."/>
            <person name="Land M."/>
            <person name="Hauser L."/>
            <person name="Kyrpides N."/>
            <person name="Anderson I."/>
            <person name="Wall J.D."/>
            <person name="Arkin A.P."/>
            <person name="Dehal P."/>
            <person name="Chivian D."/>
            <person name="Giles B."/>
            <person name="Hazen T.C."/>
        </authorList>
    </citation>
    <scope>NUCLEOTIDE SEQUENCE [LARGE SCALE GENOMIC DNA]</scope>
    <source>
        <strain>ATCC 14822 / DSM 2638 / NCIMB 8403 / VKM B-1763</strain>
    </source>
</reference>